<keyword id="KW-1185">Reference proteome</keyword>
<keyword id="KW-0687">Ribonucleoprotein</keyword>
<keyword id="KW-0689">Ribosomal protein</keyword>
<keyword id="KW-0694">RNA-binding</keyword>
<keyword id="KW-0699">rRNA-binding</keyword>
<organism>
    <name type="scientific">Methanocorpusculum labreanum (strain ATCC 43576 / DSM 4855 / Z)</name>
    <dbReference type="NCBI Taxonomy" id="410358"/>
    <lineage>
        <taxon>Archaea</taxon>
        <taxon>Methanobacteriati</taxon>
        <taxon>Methanobacteriota</taxon>
        <taxon>Stenosarchaea group</taxon>
        <taxon>Methanomicrobia</taxon>
        <taxon>Methanomicrobiales</taxon>
        <taxon>Methanocorpusculaceae</taxon>
        <taxon>Methanocorpusculum</taxon>
    </lineage>
</organism>
<name>RS4_METLZ</name>
<dbReference type="EMBL" id="CP000559">
    <property type="protein sequence ID" value="ABN07415.1"/>
    <property type="molecule type" value="Genomic_DNA"/>
</dbReference>
<dbReference type="RefSeq" id="WP_011833618.1">
    <property type="nucleotide sequence ID" value="NC_008942.1"/>
</dbReference>
<dbReference type="SMR" id="A2SSV9"/>
<dbReference type="STRING" id="410358.Mlab_1246"/>
<dbReference type="GeneID" id="4795262"/>
<dbReference type="KEGG" id="mla:Mlab_1246"/>
<dbReference type="eggNOG" id="arCOG04239">
    <property type="taxonomic scope" value="Archaea"/>
</dbReference>
<dbReference type="HOGENOM" id="CLU_089738_1_1_2"/>
<dbReference type="OrthoDB" id="10429at2157"/>
<dbReference type="Proteomes" id="UP000000365">
    <property type="component" value="Chromosome"/>
</dbReference>
<dbReference type="GO" id="GO:0015935">
    <property type="term" value="C:small ribosomal subunit"/>
    <property type="evidence" value="ECO:0007669"/>
    <property type="project" value="InterPro"/>
</dbReference>
<dbReference type="GO" id="GO:0019843">
    <property type="term" value="F:rRNA binding"/>
    <property type="evidence" value="ECO:0007669"/>
    <property type="project" value="UniProtKB-UniRule"/>
</dbReference>
<dbReference type="GO" id="GO:0003735">
    <property type="term" value="F:structural constituent of ribosome"/>
    <property type="evidence" value="ECO:0007669"/>
    <property type="project" value="InterPro"/>
</dbReference>
<dbReference type="GO" id="GO:0042274">
    <property type="term" value="P:ribosomal small subunit biogenesis"/>
    <property type="evidence" value="ECO:0007669"/>
    <property type="project" value="TreeGrafter"/>
</dbReference>
<dbReference type="GO" id="GO:0006412">
    <property type="term" value="P:translation"/>
    <property type="evidence" value="ECO:0007669"/>
    <property type="project" value="UniProtKB-UniRule"/>
</dbReference>
<dbReference type="CDD" id="cd00165">
    <property type="entry name" value="S4"/>
    <property type="match status" value="1"/>
</dbReference>
<dbReference type="Gene3D" id="3.10.290.10">
    <property type="entry name" value="RNA-binding S4 domain"/>
    <property type="match status" value="1"/>
</dbReference>
<dbReference type="HAMAP" id="MF_01306_A">
    <property type="entry name" value="Ribosomal_uS4_A"/>
    <property type="match status" value="1"/>
</dbReference>
<dbReference type="InterPro" id="IPR022801">
    <property type="entry name" value="Ribosomal_uS4"/>
</dbReference>
<dbReference type="InterPro" id="IPR022802">
    <property type="entry name" value="Ribosomal_uS4_arc"/>
</dbReference>
<dbReference type="InterPro" id="IPR018079">
    <property type="entry name" value="Ribosomal_uS4_CS"/>
</dbReference>
<dbReference type="InterPro" id="IPR005710">
    <property type="entry name" value="Ribosomal_uS4_euk/arc"/>
</dbReference>
<dbReference type="InterPro" id="IPR001912">
    <property type="entry name" value="Ribosomal_uS4_N"/>
</dbReference>
<dbReference type="InterPro" id="IPR002942">
    <property type="entry name" value="S4_RNA-bd"/>
</dbReference>
<dbReference type="InterPro" id="IPR036986">
    <property type="entry name" value="S4_RNA-bd_sf"/>
</dbReference>
<dbReference type="NCBIfam" id="NF003139">
    <property type="entry name" value="PRK04051.1"/>
    <property type="match status" value="1"/>
</dbReference>
<dbReference type="NCBIfam" id="TIGR01018">
    <property type="entry name" value="uS4_arch"/>
    <property type="match status" value="1"/>
</dbReference>
<dbReference type="PANTHER" id="PTHR11831">
    <property type="entry name" value="30S 40S RIBOSOMAL PROTEIN"/>
    <property type="match status" value="1"/>
</dbReference>
<dbReference type="PANTHER" id="PTHR11831:SF5">
    <property type="entry name" value="40S RIBOSOMAL PROTEIN S9"/>
    <property type="match status" value="1"/>
</dbReference>
<dbReference type="Pfam" id="PF01479">
    <property type="entry name" value="S4"/>
    <property type="match status" value="1"/>
</dbReference>
<dbReference type="SMART" id="SM01390">
    <property type="entry name" value="Ribosomal_S4"/>
    <property type="match status" value="1"/>
</dbReference>
<dbReference type="SMART" id="SM00363">
    <property type="entry name" value="S4"/>
    <property type="match status" value="1"/>
</dbReference>
<dbReference type="SUPFAM" id="SSF55174">
    <property type="entry name" value="Alpha-L RNA-binding motif"/>
    <property type="match status" value="1"/>
</dbReference>
<dbReference type="PROSITE" id="PS00632">
    <property type="entry name" value="RIBOSOMAL_S4"/>
    <property type="match status" value="1"/>
</dbReference>
<dbReference type="PROSITE" id="PS50889">
    <property type="entry name" value="S4"/>
    <property type="match status" value="1"/>
</dbReference>
<gene>
    <name evidence="1" type="primary">rps4</name>
    <name type="ordered locus">Mlab_1246</name>
</gene>
<feature type="chain" id="PRO_0000293405" description="Small ribosomal subunit protein uS4">
    <location>
        <begin position="1"/>
        <end position="181"/>
    </location>
</feature>
<feature type="domain" description="S4 RNA-binding" evidence="1">
    <location>
        <begin position="108"/>
        <end position="180"/>
    </location>
</feature>
<accession>A2SSV9</accession>
<evidence type="ECO:0000255" key="1">
    <source>
        <dbReference type="HAMAP-Rule" id="MF_01306"/>
    </source>
</evidence>
<evidence type="ECO:0000305" key="2"/>
<protein>
    <recommendedName>
        <fullName evidence="1">Small ribosomal subunit protein uS4</fullName>
    </recommendedName>
    <alternativeName>
        <fullName evidence="2">30S ribosomal protein S4</fullName>
    </alternativeName>
</protein>
<comment type="function">
    <text evidence="1">One of the primary rRNA binding proteins, it binds directly to 16S rRNA where it nucleates assembly of the body of the 30S subunit.</text>
</comment>
<comment type="function">
    <text evidence="1">With S5 and S12 plays an important role in translational accuracy.</text>
</comment>
<comment type="subunit">
    <text evidence="1">Part of the 30S ribosomal subunit. Contacts protein S5. The interaction surface between S4 and S5 is involved in control of translational fidelity.</text>
</comment>
<comment type="similarity">
    <text evidence="1">Belongs to the universal ribosomal protein uS4 family.</text>
</comment>
<reference key="1">
    <citation type="journal article" date="2009" name="Stand. Genomic Sci.">
        <title>Complete genome sequence of Methanocorpusculum labreanum type strain Z.</title>
        <authorList>
            <person name="Anderson I.J."/>
            <person name="Sieprawska-Lupa M."/>
            <person name="Goltsman E."/>
            <person name="Lapidus A."/>
            <person name="Copeland A."/>
            <person name="Glavina Del Rio T."/>
            <person name="Tice H."/>
            <person name="Dalin E."/>
            <person name="Barry K."/>
            <person name="Pitluck S."/>
            <person name="Hauser L."/>
            <person name="Land M."/>
            <person name="Lucas S."/>
            <person name="Richardson P."/>
            <person name="Whitman W.B."/>
            <person name="Kyrpides N.C."/>
        </authorList>
    </citation>
    <scope>NUCLEOTIDE SEQUENCE [LARGE SCALE GENOMIC DNA]</scope>
    <source>
        <strain>ATCC 43576 / DSM 4855 / Z</strain>
    </source>
</reference>
<sequence length="181" mass="20488">MGYPGKNTKQYSSPKRRFEKSRIESERVLAITYGLRNKREIWRATEVLRKHRSGAREVLAMTSSIGEAPKTIARRDELVGTLQRYGLLGPDAAMDNILSLKVEDILERRLQTIVYRKGLARSPKQARQLITHGHIAINGQRVSVPSYMVSIAEEAGIMYYATSSLGDEANGERQRIMNQRA</sequence>
<proteinExistence type="inferred from homology"/>